<reference key="1">
    <citation type="journal article" date="1989" name="J. Bacteriol.">
        <title>Identification and sequence analysis of two related flagellin genes in Rhizobium meliloti.</title>
        <authorList>
            <person name="Pleier E."/>
            <person name="Schmitt R."/>
        </authorList>
    </citation>
    <scope>NUCLEOTIDE SEQUENCE [GENOMIC DNA]</scope>
    <source>
        <strain>RU10406</strain>
    </source>
</reference>
<reference key="2">
    <citation type="submission" date="1995-12" db="EMBL/GenBank/DDBJ databases">
        <authorList>
            <person name="Platzer J."/>
            <person name="Schmitt R."/>
        </authorList>
    </citation>
    <scope>NUCLEOTIDE SEQUENCE [GENOMIC DNA]</scope>
    <source>
        <strain>RU11/001</strain>
    </source>
</reference>
<reference key="3">
    <citation type="submission" date="2001-01" db="EMBL/GenBank/DDBJ databases">
        <authorList>
            <person name="Schmitt R."/>
        </authorList>
    </citation>
    <scope>SEQUENCE REVISION TO 8; 13; 71; 220 AND 303-304</scope>
</reference>
<keyword id="KW-0975">Bacterial flagellum</keyword>
<keyword id="KW-0964">Secreted</keyword>
<organism>
    <name type="scientific">Rhizobium meliloti</name>
    <name type="common">Ensifer meliloti</name>
    <name type="synonym">Sinorhizobium meliloti</name>
    <dbReference type="NCBI Taxonomy" id="382"/>
    <lineage>
        <taxon>Bacteria</taxon>
        <taxon>Pseudomonadati</taxon>
        <taxon>Pseudomonadota</taxon>
        <taxon>Alphaproteobacteria</taxon>
        <taxon>Hyphomicrobiales</taxon>
        <taxon>Rhizobiaceae</taxon>
        <taxon>Sinorhizobium/Ensifer group</taxon>
        <taxon>Sinorhizobium</taxon>
    </lineage>
</organism>
<accession>P13119</accession>
<accession>Q52941</accession>
<sequence length="395" mass="40720">MTSILTNIAAMAALQTLRTIGSNMEETQAHVSSGLRVGQAADNAAYWSIATTMRSDNMALSAVQDALGLGAAKVDTAYSGMESAIEVVKEIKKKLVAATEDGVDKAKIQEEIDQLKDQLTSISEAASFSGENWLQADLSGGAVTKSVVGSFVRDASGAVSVKKVDYSLNTNSVLFDTVGNTGILDKVYNVSQASVTLTINTNGVASQHTVAAYSLESLTQAGAEFQGNYALQGGNSYVKVDNVWVRAETAATGATGQELAATTTAAGTITADSWVVDVGNAPAANVSAGQSVAGINIVGMGAAALDALISGVDAALTDMTSAAADLGSIAMRIDLQSDFVNKLSDSIDSGVGRLVDADMNEESTRLKALQTQQQLAIQSLSIANSASENVLTLFR</sequence>
<protein>
    <recommendedName>
        <fullName>Flagellin B</fullName>
    </recommendedName>
</protein>
<gene>
    <name type="primary">flaB</name>
</gene>
<proteinExistence type="inferred from homology"/>
<name>FLAB_RHIML</name>
<evidence type="ECO:0000305" key="1"/>
<feature type="chain" id="PRO_0000182624" description="Flagellin B">
    <location>
        <begin position="1"/>
        <end position="395"/>
    </location>
</feature>
<feature type="sequence conflict" description="In Ref. 1; AAA26278." evidence="1" ref="1">
    <original>I</original>
    <variation>T</variation>
    <location>
        <position position="8"/>
    </location>
</feature>
<feature type="sequence conflict" description="In Ref. 1; AAA26278." evidence="1" ref="1">
    <original>A</original>
    <variation>V</variation>
    <location>
        <position position="13"/>
    </location>
</feature>
<feature type="sequence conflict" description="In Ref. 1; AAA26278." evidence="1" ref="1">
    <original>A</original>
    <variation>V</variation>
    <location>
        <position position="71"/>
    </location>
</feature>
<feature type="sequence conflict" description="In Ref. 1; AAA26278." evidence="1" ref="1">
    <original>Q</original>
    <variation>E</variation>
    <location>
        <position position="220"/>
    </location>
</feature>
<feature type="sequence conflict" description="In Ref. 1; AAA26278." evidence="1" ref="1">
    <original>AA</original>
    <variation>VR</variation>
    <location>
        <begin position="303"/>
        <end position="304"/>
    </location>
</feature>
<feature type="sequence conflict" description="In Ref. 1; AAA26278." evidence="1" ref="1">
    <original>SDSIDS</original>
    <variation>MDVIDK</variation>
    <location>
        <begin position="344"/>
        <end position="349"/>
    </location>
</feature>
<feature type="sequence conflict" description="In Ref. 1; AAA26278." evidence="1" ref="1">
    <original>A</original>
    <variation>G</variation>
    <location>
        <position position="376"/>
    </location>
</feature>
<feature type="sequence conflict" description="In Ref. 1; AAA26278." evidence="1" ref="1">
    <original>SA</original>
    <variation>TT</variation>
    <location>
        <begin position="385"/>
        <end position="386"/>
    </location>
</feature>
<feature type="sequence conflict" description="In Ref. 1; AAA26278." evidence="1" ref="1">
    <original>VLTLFR</original>
    <variation>ILRLFQE</variation>
    <location>
        <begin position="390"/>
        <end position="395"/>
    </location>
</feature>
<comment type="function">
    <text>Flagellin is the subunit protein which polymerizes to form the filaments of bacterial flagella.</text>
</comment>
<comment type="subcellular location">
    <subcellularLocation>
        <location>Secreted</location>
    </subcellularLocation>
    <subcellularLocation>
        <location>Bacterial flagellum</location>
    </subcellularLocation>
</comment>
<comment type="similarity">
    <text evidence="1">Belongs to the bacterial flagellin family.</text>
</comment>
<dbReference type="EMBL" id="M24526">
    <property type="protein sequence ID" value="AAA26278.1"/>
    <property type="molecule type" value="Genomic_DNA"/>
</dbReference>
<dbReference type="EMBL" id="L49337">
    <property type="protein sequence ID" value="AAB81423.2"/>
    <property type="molecule type" value="Genomic_DNA"/>
</dbReference>
<dbReference type="PIR" id="B32808">
    <property type="entry name" value="B32808"/>
</dbReference>
<dbReference type="RefSeq" id="WP_003529884.1">
    <property type="nucleotide sequence ID" value="NZ_BJNJ01000056.1"/>
</dbReference>
<dbReference type="SMR" id="P13119"/>
<dbReference type="PATRIC" id="fig|382.53.peg.2608"/>
<dbReference type="GO" id="GO:0009288">
    <property type="term" value="C:bacterial-type flagellum"/>
    <property type="evidence" value="ECO:0007669"/>
    <property type="project" value="UniProtKB-SubCell"/>
</dbReference>
<dbReference type="GO" id="GO:0005576">
    <property type="term" value="C:extracellular region"/>
    <property type="evidence" value="ECO:0007669"/>
    <property type="project" value="UniProtKB-SubCell"/>
</dbReference>
<dbReference type="GO" id="GO:0005198">
    <property type="term" value="F:structural molecule activity"/>
    <property type="evidence" value="ECO:0007669"/>
    <property type="project" value="InterPro"/>
</dbReference>
<dbReference type="Gene3D" id="1.20.1330.10">
    <property type="entry name" value="f41 fragment of flagellin, N-terminal domain"/>
    <property type="match status" value="2"/>
</dbReference>
<dbReference type="InterPro" id="IPR001492">
    <property type="entry name" value="Flagellin"/>
</dbReference>
<dbReference type="InterPro" id="IPR046358">
    <property type="entry name" value="Flagellin_C"/>
</dbReference>
<dbReference type="InterPro" id="IPR001029">
    <property type="entry name" value="Flagellin_N"/>
</dbReference>
<dbReference type="PANTHER" id="PTHR42792">
    <property type="entry name" value="FLAGELLIN"/>
    <property type="match status" value="1"/>
</dbReference>
<dbReference type="PANTHER" id="PTHR42792:SF2">
    <property type="entry name" value="FLAGELLIN"/>
    <property type="match status" value="1"/>
</dbReference>
<dbReference type="Pfam" id="PF00700">
    <property type="entry name" value="Flagellin_C"/>
    <property type="match status" value="1"/>
</dbReference>
<dbReference type="Pfam" id="PF00669">
    <property type="entry name" value="Flagellin_N"/>
    <property type="match status" value="1"/>
</dbReference>
<dbReference type="PRINTS" id="PR00207">
    <property type="entry name" value="FLAGELLIN"/>
</dbReference>
<dbReference type="SUPFAM" id="SSF64518">
    <property type="entry name" value="Phase 1 flagellin"/>
    <property type="match status" value="1"/>
</dbReference>